<comment type="function">
    <text evidence="1 2 3">Forms pore that permeabilize the cell membrane. Promotes efflux of calcium from synaptosomes, causes hemolysis, and dissipates voltage gradients across muscle membrane. Potently inhibits the growth of bacteria, yeast and Leishmania. May function both in the prey capture strategy as well as protection from infectious organisms arising from prey ingestion (By similarity).</text>
</comment>
<comment type="subcellular location">
    <subcellularLocation>
        <location>Secreted</location>
    </subcellularLocation>
</comment>
<comment type="tissue specificity">
    <text>Expressed by the venom gland.</text>
</comment>
<comment type="mass spectrometry"/>
<comment type="similarity">
    <text>Belongs to the cationic peptide 04 (cupiennin) family. 05 subfamily.</text>
</comment>
<reference key="1">
    <citation type="journal article" date="1998" name="J. Biol. Chem.">
        <title>Lycotoxins, antimicrobial peptides from venom of the wolf spider Lycosa carolinensis.</title>
        <authorList>
            <person name="Yan L."/>
            <person name="Adams M.E."/>
        </authorList>
    </citation>
    <scope>PROTEIN SEQUENCE</scope>
    <scope>FUNCTION</scope>
    <scope>SYNTHESIS</scope>
    <scope>MASS SPECTROMETRY</scope>
    <source>
        <tissue>Venom</tissue>
    </source>
</reference>
<reference key="2">
    <citation type="journal article" date="2008" name="J. Pept. Sci.">
        <title>Membrane structure and interactions of a short Lycotoxin I analogue.</title>
        <authorList>
            <person name="Adao R."/>
            <person name="Seixas R."/>
            <person name="Gomes P."/>
            <person name="Pessoa J.C."/>
            <person name="Bastos M."/>
        </authorList>
    </citation>
    <scope>FUNCTION</scope>
</reference>
<accession>P61508</accession>
<feature type="peptide" id="PRO_0000044559" description="M-lycotoxin-Hc2a">
    <location>
        <begin position="1"/>
        <end position="27"/>
    </location>
</feature>
<proteinExistence type="evidence at protein level"/>
<dbReference type="ArachnoServer" id="AS000066">
    <property type="toxin name" value="M-lycotoxin-Hc2a"/>
</dbReference>
<dbReference type="GO" id="GO:0005576">
    <property type="term" value="C:extracellular region"/>
    <property type="evidence" value="ECO:0007669"/>
    <property type="project" value="UniProtKB-SubCell"/>
</dbReference>
<dbReference type="GO" id="GO:0090729">
    <property type="term" value="F:toxin activity"/>
    <property type="evidence" value="ECO:0007669"/>
    <property type="project" value="UniProtKB-KW"/>
</dbReference>
<dbReference type="GO" id="GO:0042742">
    <property type="term" value="P:defense response to bacterium"/>
    <property type="evidence" value="ECO:0007669"/>
    <property type="project" value="UniProtKB-KW"/>
</dbReference>
<dbReference type="GO" id="GO:0031640">
    <property type="term" value="P:killing of cells of another organism"/>
    <property type="evidence" value="ECO:0007669"/>
    <property type="project" value="UniProtKB-KW"/>
</dbReference>
<name>LYT2_HOGCA</name>
<protein>
    <recommendedName>
        <fullName>M-lycotoxin-Hc2a</fullName>
        <shortName>M-LCTX-Hc2a</shortName>
    </recommendedName>
    <alternativeName>
        <fullName>Lycotoxin II</fullName>
    </alternativeName>
    <alternativeName>
        <fullName>Lycotoxin-2</fullName>
    </alternativeName>
</protein>
<organism>
    <name type="scientific">Hogna carolinensis</name>
    <name type="common">Carolina wolf spider</name>
    <name type="synonym">Lycosa carolinensis</name>
    <dbReference type="NCBI Taxonomy" id="278031"/>
    <lineage>
        <taxon>Eukaryota</taxon>
        <taxon>Metazoa</taxon>
        <taxon>Ecdysozoa</taxon>
        <taxon>Arthropoda</taxon>
        <taxon>Chelicerata</taxon>
        <taxon>Arachnida</taxon>
        <taxon>Araneae</taxon>
        <taxon>Araneomorphae</taxon>
        <taxon>Entelegynae</taxon>
        <taxon>Lycosoidea</taxon>
        <taxon>Lycosidae</taxon>
        <taxon>Hogna</taxon>
    </lineage>
</organism>
<evidence type="ECO:0000250" key="1"/>
<evidence type="ECO:0000269" key="2">
    <source>
    </source>
</evidence>
<evidence type="ECO:0000269" key="3">
    <source>
    </source>
</evidence>
<keyword id="KW-0044">Antibiotic</keyword>
<keyword id="KW-0929">Antimicrobial</keyword>
<keyword id="KW-0204">Cytolysis</keyword>
<keyword id="KW-0903">Direct protein sequencing</keyword>
<keyword id="KW-0354">Hemolysis</keyword>
<keyword id="KW-0528">Neurotoxin</keyword>
<keyword id="KW-0964">Secreted</keyword>
<keyword id="KW-0800">Toxin</keyword>
<sequence>KIKWFKTMKSIAKFIAKEQMKKHLGGE</sequence>